<organism>
    <name type="scientific">Enterobacteria phage RB70</name>
    <name type="common">Bacteriophage RB70</name>
    <dbReference type="NCBI Taxonomy" id="36338"/>
    <lineage>
        <taxon>Viruses</taxon>
        <taxon>Duplodnaviria</taxon>
        <taxon>Heunggongvirae</taxon>
        <taxon>Uroviricota</taxon>
        <taxon>Caudoviricetes</taxon>
        <taxon>Straboviridae</taxon>
        <taxon>Tevenvirinae</taxon>
        <taxon>Tequatrovirus</taxon>
    </lineage>
</organism>
<accession>P42268</accession>
<feature type="chain" id="PRO_0000164965" description="Nucleoid disruption protein">
    <location>
        <begin position="1"/>
        <end position="147"/>
    </location>
</feature>
<keyword id="KW-0238">DNA-binding</keyword>
<keyword id="KW-0945">Host-virus interaction</keyword>
<keyword id="KW-1248">Inhibition of host DNA replication by virus</keyword>
<keyword id="KW-1121">Modulation of host cell cycle by virus</keyword>
<sequence>MKYMTVTDLNNAGATVIGTIKGGEWFLGTPHKDILSKPGFYFLVSEFDGSCVSARFYVGNQRSKQGFSAVLSHIRQRRSQLARTIANNNMAYTVFYLPASKMKPLTTGFGKGQLALAFTRNHHSEYQTLEEMNRMLADNFKFVLQAY</sequence>
<dbReference type="GO" id="GO:0003677">
    <property type="term" value="F:DNA binding"/>
    <property type="evidence" value="ECO:0007669"/>
    <property type="project" value="UniProtKB-KW"/>
</dbReference>
<dbReference type="GO" id="GO:0044071">
    <property type="term" value="P:symbiont-mediated perturbation of host cell cycle progression"/>
    <property type="evidence" value="ECO:0007669"/>
    <property type="project" value="UniProtKB-KW"/>
</dbReference>
<dbReference type="GO" id="GO:0098673">
    <property type="term" value="P:symbiont-mediated suppression of host DNA replication"/>
    <property type="evidence" value="ECO:0007669"/>
    <property type="project" value="UniProtKB-KW"/>
</dbReference>
<dbReference type="InterPro" id="IPR009514">
    <property type="entry name" value="Phage_Ndd"/>
</dbReference>
<dbReference type="Pfam" id="PF06591">
    <property type="entry name" value="Phage_T4_Ndd"/>
    <property type="match status" value="1"/>
</dbReference>
<reference key="1">
    <citation type="journal article" date="1994" name="Gene">
        <title>Direct PCR sequencing of the ndd gene of bacteriophage T4: identification of a product involved in bacterial nucleoid disruption.</title>
        <authorList>
            <person name="Bouet J.-Y."/>
            <person name="Woszczyk J."/>
            <person name="Repoila F."/>
            <person name="Francois V."/>
            <person name="Louarn J.-M."/>
            <person name="Krisch H.M."/>
        </authorList>
    </citation>
    <scope>NUCLEOTIDE SEQUENCE</scope>
</reference>
<evidence type="ECO:0000250" key="1">
    <source>
        <dbReference type="UniProtKB" id="P15556"/>
    </source>
</evidence>
<protein>
    <recommendedName>
        <fullName>Nucleoid disruption protein</fullName>
    </recommendedName>
    <alternativeName>
        <fullName>Nuclear disruption protein</fullName>
    </alternativeName>
</protein>
<proteinExistence type="inferred from homology"/>
<gene>
    <name type="primary">ndd</name>
</gene>
<name>NDD_BPR70</name>
<comment type="function">
    <text evidence="1">Disorganizes the host nucleoid and inhibits replication, but without host DNA cleavage or degradation. Only the architecture of the nucleoid is affected. May act on the host chromosomal sequences that determine the structure of the nucleoid. Binds to dsDNA but not to ssDNA.</text>
</comment>
<organismHost>
    <name type="scientific">Escherichia coli</name>
    <dbReference type="NCBI Taxonomy" id="562"/>
</organismHost>